<accession>A7MS83</accession>
<name>GRCA_VIBC1</name>
<gene>
    <name evidence="1" type="primary">grcA</name>
    <name type="ordered locus">VIBHAR_00943</name>
</gene>
<sequence>MIQGIQITKAANDELLNSIWLLDSEKNEARCVAAASTYEADQVIAISDLGDYESREVAIETAPRIEGGQHLNVNVLKRETLEDAVAHPENYPQLTIRVSGYAVRFNSLTPEQQRDVIARTFTESL</sequence>
<feature type="chain" id="PRO_1000083739" description="Autonomous glycyl radical cofactor">
    <location>
        <begin position="1"/>
        <end position="125"/>
    </location>
</feature>
<feature type="domain" description="Glycine radical" evidence="1">
    <location>
        <begin position="5"/>
        <end position="125"/>
    </location>
</feature>
<feature type="modified residue" description="Glycine radical" evidence="1">
    <location>
        <position position="100"/>
    </location>
</feature>
<keyword id="KW-0556">Organic radical</keyword>
<protein>
    <recommendedName>
        <fullName evidence="1">Autonomous glycyl radical cofactor</fullName>
    </recommendedName>
</protein>
<organism>
    <name type="scientific">Vibrio campbellii (strain ATCC BAA-1116)</name>
    <dbReference type="NCBI Taxonomy" id="2902295"/>
    <lineage>
        <taxon>Bacteria</taxon>
        <taxon>Pseudomonadati</taxon>
        <taxon>Pseudomonadota</taxon>
        <taxon>Gammaproteobacteria</taxon>
        <taxon>Vibrionales</taxon>
        <taxon>Vibrionaceae</taxon>
        <taxon>Vibrio</taxon>
    </lineage>
</organism>
<evidence type="ECO:0000255" key="1">
    <source>
        <dbReference type="HAMAP-Rule" id="MF_00806"/>
    </source>
</evidence>
<reference key="1">
    <citation type="submission" date="2007-08" db="EMBL/GenBank/DDBJ databases">
        <authorList>
            <consortium name="The Vibrio harveyi Genome Sequencing Project"/>
            <person name="Bassler B."/>
            <person name="Clifton S.W."/>
            <person name="Fulton L."/>
            <person name="Delehaunty K."/>
            <person name="Fronick C."/>
            <person name="Harrison M."/>
            <person name="Markivic C."/>
            <person name="Fulton R."/>
            <person name="Tin-Wollam A.-M."/>
            <person name="Shah N."/>
            <person name="Pepin K."/>
            <person name="Nash W."/>
            <person name="Thiruvilangam P."/>
            <person name="Bhonagiri V."/>
            <person name="Waters C."/>
            <person name="Tu K.C."/>
            <person name="Irgon J."/>
            <person name="Wilson R.K."/>
        </authorList>
    </citation>
    <scope>NUCLEOTIDE SEQUENCE [LARGE SCALE GENOMIC DNA]</scope>
    <source>
        <strain>ATCC BAA-1116 / BB120</strain>
    </source>
</reference>
<proteinExistence type="inferred from homology"/>
<dbReference type="EMBL" id="CP000789">
    <property type="protein sequence ID" value="ABU69942.1"/>
    <property type="molecule type" value="Genomic_DNA"/>
</dbReference>
<dbReference type="RefSeq" id="WP_005426458.1">
    <property type="nucleotide sequence ID" value="NC_022269.1"/>
</dbReference>
<dbReference type="SMR" id="A7MS83"/>
<dbReference type="GeneID" id="67378423"/>
<dbReference type="KEGG" id="vha:VIBHAR_00943"/>
<dbReference type="PATRIC" id="fig|338187.25.peg.1679"/>
<dbReference type="Proteomes" id="UP000008152">
    <property type="component" value="Chromosome I"/>
</dbReference>
<dbReference type="GO" id="GO:0005829">
    <property type="term" value="C:cytosol"/>
    <property type="evidence" value="ECO:0007669"/>
    <property type="project" value="TreeGrafter"/>
</dbReference>
<dbReference type="GO" id="GO:0008861">
    <property type="term" value="F:formate C-acetyltransferase activity"/>
    <property type="evidence" value="ECO:0007669"/>
    <property type="project" value="TreeGrafter"/>
</dbReference>
<dbReference type="FunFam" id="3.20.70.20:FF:000002">
    <property type="entry name" value="Autonomous glycyl radical cofactor"/>
    <property type="match status" value="1"/>
</dbReference>
<dbReference type="Gene3D" id="3.20.70.20">
    <property type="match status" value="1"/>
</dbReference>
<dbReference type="HAMAP" id="MF_00806">
    <property type="entry name" value="GrcA"/>
    <property type="match status" value="1"/>
</dbReference>
<dbReference type="InterPro" id="IPR050244">
    <property type="entry name" value="Auton_GlycylRad_Cofactor"/>
</dbReference>
<dbReference type="InterPro" id="IPR019777">
    <property type="entry name" value="Form_AcTrfase_GR_CS"/>
</dbReference>
<dbReference type="InterPro" id="IPR001150">
    <property type="entry name" value="Gly_radical"/>
</dbReference>
<dbReference type="InterPro" id="IPR011140">
    <property type="entry name" value="Glycyl_radical_cofactor_GrcA"/>
</dbReference>
<dbReference type="NCBIfam" id="TIGR04365">
    <property type="entry name" value="spare_glycyl"/>
    <property type="match status" value="1"/>
</dbReference>
<dbReference type="PANTHER" id="PTHR30191">
    <property type="entry name" value="FORMATE ACETYLTRANSFERASE"/>
    <property type="match status" value="1"/>
</dbReference>
<dbReference type="PANTHER" id="PTHR30191:SF0">
    <property type="entry name" value="FORMATE ACETYLTRANSFERASE 1"/>
    <property type="match status" value="1"/>
</dbReference>
<dbReference type="Pfam" id="PF01228">
    <property type="entry name" value="Gly_radical"/>
    <property type="match status" value="1"/>
</dbReference>
<dbReference type="PIRSF" id="PIRSF000378">
    <property type="entry name" value="Gly_radicl_yfiD"/>
    <property type="match status" value="1"/>
</dbReference>
<dbReference type="SUPFAM" id="SSF51998">
    <property type="entry name" value="PFL-like glycyl radical enzymes"/>
    <property type="match status" value="1"/>
</dbReference>
<dbReference type="PROSITE" id="PS00850">
    <property type="entry name" value="GLY_RADICAL_1"/>
    <property type="match status" value="1"/>
</dbReference>
<dbReference type="PROSITE" id="PS51149">
    <property type="entry name" value="GLY_RADICAL_2"/>
    <property type="match status" value="1"/>
</dbReference>
<comment type="function">
    <text evidence="1">Acts as a radical domain for damaged PFL and possibly other radical proteins.</text>
</comment>